<sequence length="173" mass="19760">MDIAIQHPWFKRALGPFYPSRLFDQFFGEGLFEYDLLPFLSSTISPYYRQSLFRTVLDSGISEVRSDRDKFVIFLDVKHFSPEDLTVKVQEDFVEIHGKHNERQDDHGYISREFHRRYRLPSNVDQSALSCSLSADGMLTFSGPKIPSGVDAGHSERAIPVSREEKPSSAPSS</sequence>
<keyword id="KW-0007">Acetylation</keyword>
<keyword id="KW-0143">Chaperone</keyword>
<keyword id="KW-0963">Cytoplasm</keyword>
<keyword id="KW-0903">Direct protein sequencing</keyword>
<keyword id="KW-0273">Eye lens protein</keyword>
<keyword id="KW-0325">Glycoprotein</keyword>
<keyword id="KW-0479">Metal-binding</keyword>
<keyword id="KW-0488">Methylation</keyword>
<keyword id="KW-0539">Nucleus</keyword>
<keyword id="KW-0597">Phosphoprotein</keyword>
<keyword id="KW-0862">Zinc</keyword>
<accession>P68284</accession>
<accession>P02471</accession>
<proteinExistence type="evidence at protein level"/>
<gene>
    <name type="primary">CRYAA</name>
</gene>
<feature type="chain" id="PRO_0000125861" description="Alpha-crystallin A chain">
    <location>
        <begin position="1"/>
        <end position="173"/>
    </location>
</feature>
<feature type="domain" description="sHSP" evidence="5">
    <location>
        <begin position="52"/>
        <end position="162"/>
    </location>
</feature>
<feature type="region of interest" description="Required for complex formation with BFSP1 and BFSP2" evidence="4">
    <location>
        <begin position="1"/>
        <end position="63"/>
    </location>
</feature>
<feature type="region of interest" description="Disordered" evidence="6">
    <location>
        <begin position="144"/>
        <end position="173"/>
    </location>
</feature>
<feature type="compositionally biased region" description="Basic and acidic residues" evidence="6">
    <location>
        <begin position="153"/>
        <end position="167"/>
    </location>
</feature>
<feature type="binding site" evidence="2">
    <location>
        <position position="100"/>
    </location>
    <ligand>
        <name>Zn(2+)</name>
        <dbReference type="ChEBI" id="CHEBI:29105"/>
        <label>1</label>
    </ligand>
</feature>
<feature type="binding site" evidence="2">
    <location>
        <position position="102"/>
    </location>
    <ligand>
        <name>Zn(2+)</name>
        <dbReference type="ChEBI" id="CHEBI:29105"/>
        <label>1</label>
    </ligand>
</feature>
<feature type="binding site" evidence="2">
    <location>
        <position position="107"/>
    </location>
    <ligand>
        <name>Zn(2+)</name>
        <dbReference type="ChEBI" id="CHEBI:29105"/>
        <label>2</label>
    </ligand>
</feature>
<feature type="binding site" evidence="2">
    <location>
        <position position="154"/>
    </location>
    <ligand>
        <name>Zn(2+)</name>
        <dbReference type="ChEBI" id="CHEBI:29105"/>
        <label>3</label>
    </ligand>
</feature>
<feature type="modified residue" description="N-acetylmethionine" evidence="3 7">
    <location>
        <position position="1"/>
    </location>
</feature>
<feature type="modified residue" description="Deamidated glutamine; partial" evidence="1">
    <location>
        <position position="6"/>
    </location>
</feature>
<feature type="modified residue" description="Phosphoserine" evidence="4">
    <location>
        <position position="45"/>
    </location>
</feature>
<feature type="modified residue" description="Deamidated glutamine; partial" evidence="1">
    <location>
        <position position="50"/>
    </location>
</feature>
<feature type="modified residue" description="N6-acetyllysine" evidence="4">
    <location>
        <position position="70"/>
    </location>
</feature>
<feature type="modified residue" description="Deamidated glutamine; partial" evidence="1">
    <location>
        <position position="90"/>
    </location>
</feature>
<feature type="modified residue" description="N6-acetyllysine" evidence="4">
    <location>
        <position position="99"/>
    </location>
</feature>
<feature type="modified residue" description="Deamidated asparagine; partial" evidence="1">
    <location>
        <position position="101"/>
    </location>
</feature>
<feature type="modified residue" description="Phosphoserine" evidence="2">
    <location>
        <position position="122"/>
    </location>
</feature>
<feature type="modified residue" description="Deamidated asparagine; partial" evidence="1">
    <location>
        <position position="123"/>
    </location>
</feature>
<feature type="glycosylation site" description="O-linked (GlcNAc) serine" evidence="1">
    <location>
        <position position="162"/>
    </location>
</feature>
<organism>
    <name type="scientific">Giraffa camelopardalis</name>
    <name type="common">Giraffe</name>
    <dbReference type="NCBI Taxonomy" id="9894"/>
    <lineage>
        <taxon>Eukaryota</taxon>
        <taxon>Metazoa</taxon>
        <taxon>Chordata</taxon>
        <taxon>Craniata</taxon>
        <taxon>Vertebrata</taxon>
        <taxon>Euteleostomi</taxon>
        <taxon>Mammalia</taxon>
        <taxon>Eutheria</taxon>
        <taxon>Laurasiatheria</taxon>
        <taxon>Artiodactyla</taxon>
        <taxon>Ruminantia</taxon>
        <taxon>Pecora</taxon>
        <taxon>Giraffidae</taxon>
        <taxon>Giraffa</taxon>
    </lineage>
</organism>
<comment type="function">
    <text evidence="4">Contributes to the transparency and refractive index of the lens. Acts as a chaperone, preventing aggregation of various proteins under a wide range of stress conditions. Required for the correct formation of lens intermediate filaments as part of a complex composed of BFSP1, BFSP2 and CRYAA.</text>
</comment>
<comment type="subunit">
    <text evidence="2 4">Heteromer composed of three CRYAA and one CRYAB subunits. Inter-subunit bridging via zinc ions enhances stability, which is crucial as there is no protein turn over in the lens. Can also form homodimers and homotetramers (dimers of dimers) which serve as the building blocks of homooligomers (By similarity). Within homooligomers, the zinc-binding motif is created from residues of 3 different molecules. His-100 and Glu-102 from one molecule are ligands of the zinc ion, and His-107 and His-154 residues from additional molecules complete the site with tetrahedral coordination geometry (By similarity). Part of a complex required for lens intermediate filament formation composed of BFSP1, BFSP2 and CRYAA (By similarity).</text>
</comment>
<comment type="subcellular location">
    <subcellularLocation>
        <location evidence="4">Cytoplasm</location>
    </subcellularLocation>
    <subcellularLocation>
        <location evidence="4">Nucleus</location>
    </subcellularLocation>
    <text evidence="4">Translocates to the nucleus during heat shock and resides in sub-nuclear structures known as SC35 speckles or nuclear splicing speckles.</text>
</comment>
<comment type="PTM">
    <text evidence="4">Acetylation at Lys-70 may increase chaperone activity.</text>
</comment>
<comment type="PTM">
    <text evidence="4">Undergoes age-dependent proteolytical cleavage at the C-terminus.</text>
</comment>
<comment type="similarity">
    <text evidence="5">Belongs to the small heat shock protein (HSP20) family.</text>
</comment>
<reference key="1">
    <citation type="book" date="1980" name="Protides of the biological fluids, Proc. 28th colloquium">
        <title>Trends in the molecular evolution of alpha-crystallin.</title>
        <editorList>
            <person name="Peeters H."/>
        </editorList>
        <authorList>
            <person name="de Jong W.W."/>
            <person name="Zweers A."/>
            <person name="Goodman M."/>
        </authorList>
    </citation>
    <scope>PROTEIN SEQUENCE</scope>
</reference>
<name>CRYAA_GIRCA</name>
<evidence type="ECO:0000250" key="1"/>
<evidence type="ECO:0000250" key="2">
    <source>
        <dbReference type="UniProtKB" id="P02470"/>
    </source>
</evidence>
<evidence type="ECO:0000250" key="3">
    <source>
        <dbReference type="UniProtKB" id="P02474"/>
    </source>
</evidence>
<evidence type="ECO:0000250" key="4">
    <source>
        <dbReference type="UniProtKB" id="P02489"/>
    </source>
</evidence>
<evidence type="ECO:0000255" key="5">
    <source>
        <dbReference type="PROSITE-ProRule" id="PRU00285"/>
    </source>
</evidence>
<evidence type="ECO:0000256" key="6">
    <source>
        <dbReference type="SAM" id="MobiDB-lite"/>
    </source>
</evidence>
<evidence type="ECO:0000305" key="7"/>
<protein>
    <recommendedName>
        <fullName>Alpha-crystallin A chain</fullName>
    </recommendedName>
</protein>
<dbReference type="PIR" id="A94432">
    <property type="entry name" value="CYGFAA"/>
</dbReference>
<dbReference type="SMR" id="P68284"/>
<dbReference type="GlyCosmos" id="P68284">
    <property type="glycosylation" value="1 site, No reported glycans"/>
</dbReference>
<dbReference type="GO" id="GO:0005737">
    <property type="term" value="C:cytoplasm"/>
    <property type="evidence" value="ECO:0000250"/>
    <property type="project" value="UniProtKB"/>
</dbReference>
<dbReference type="GO" id="GO:0005634">
    <property type="term" value="C:nucleus"/>
    <property type="evidence" value="ECO:0000250"/>
    <property type="project" value="UniProtKB"/>
</dbReference>
<dbReference type="GO" id="GO:0046872">
    <property type="term" value="F:metal ion binding"/>
    <property type="evidence" value="ECO:0007669"/>
    <property type="project" value="UniProtKB-KW"/>
</dbReference>
<dbReference type="GO" id="GO:0005212">
    <property type="term" value="F:structural constituent of eye lens"/>
    <property type="evidence" value="ECO:0007669"/>
    <property type="project" value="UniProtKB-KW"/>
</dbReference>
<dbReference type="GO" id="GO:0051082">
    <property type="term" value="F:unfolded protein binding"/>
    <property type="evidence" value="ECO:0007669"/>
    <property type="project" value="TreeGrafter"/>
</dbReference>
<dbReference type="GO" id="GO:0002088">
    <property type="term" value="P:lens development in camera-type eye"/>
    <property type="evidence" value="ECO:0007669"/>
    <property type="project" value="TreeGrafter"/>
</dbReference>
<dbReference type="GO" id="GO:0043066">
    <property type="term" value="P:negative regulation of apoptotic process"/>
    <property type="evidence" value="ECO:0007669"/>
    <property type="project" value="TreeGrafter"/>
</dbReference>
<dbReference type="GO" id="GO:0042026">
    <property type="term" value="P:protein refolding"/>
    <property type="evidence" value="ECO:0007669"/>
    <property type="project" value="TreeGrafter"/>
</dbReference>
<dbReference type="GO" id="GO:0009408">
    <property type="term" value="P:response to heat"/>
    <property type="evidence" value="ECO:0007669"/>
    <property type="project" value="TreeGrafter"/>
</dbReference>
<dbReference type="FunFam" id="2.60.40.790:FF:000008">
    <property type="entry name" value="Alpha-crystallin A chain"/>
    <property type="match status" value="1"/>
</dbReference>
<dbReference type="Gene3D" id="2.60.40.790">
    <property type="match status" value="1"/>
</dbReference>
<dbReference type="InterPro" id="IPR002068">
    <property type="entry name" value="A-crystallin/Hsp20_dom"/>
</dbReference>
<dbReference type="InterPro" id="IPR055269">
    <property type="entry name" value="Alpha-crystallin/HSP_16"/>
</dbReference>
<dbReference type="InterPro" id="IPR001436">
    <property type="entry name" value="Alpha-crystallin/sHSP_animal"/>
</dbReference>
<dbReference type="InterPro" id="IPR003090">
    <property type="entry name" value="Alpha-crystallin_N"/>
</dbReference>
<dbReference type="InterPro" id="IPR008978">
    <property type="entry name" value="HSP20-like_chaperone"/>
</dbReference>
<dbReference type="PANTHER" id="PTHR45640:SF14">
    <property type="entry name" value="ALPHA-CRYSTALLIN A CHAIN"/>
    <property type="match status" value="1"/>
</dbReference>
<dbReference type="PANTHER" id="PTHR45640">
    <property type="entry name" value="HEAT SHOCK PROTEIN HSP-12.2-RELATED"/>
    <property type="match status" value="1"/>
</dbReference>
<dbReference type="Pfam" id="PF00525">
    <property type="entry name" value="Crystallin"/>
    <property type="match status" value="1"/>
</dbReference>
<dbReference type="Pfam" id="PF00011">
    <property type="entry name" value="HSP20"/>
    <property type="match status" value="1"/>
</dbReference>
<dbReference type="PIRSF" id="PIRSF036514">
    <property type="entry name" value="Sm_HSP_B1"/>
    <property type="match status" value="1"/>
</dbReference>
<dbReference type="PRINTS" id="PR00299">
    <property type="entry name" value="ACRYSTALLIN"/>
</dbReference>
<dbReference type="SUPFAM" id="SSF49764">
    <property type="entry name" value="HSP20-like chaperones"/>
    <property type="match status" value="1"/>
</dbReference>
<dbReference type="PROSITE" id="PS01031">
    <property type="entry name" value="SHSP"/>
    <property type="match status" value="1"/>
</dbReference>